<dbReference type="EMBL" id="M89999">
    <property type="protein sequence ID" value="AAA43058.1"/>
    <property type="molecule type" value="Genomic_DNA"/>
</dbReference>
<dbReference type="PIR" id="C46165">
    <property type="entry name" value="C46165"/>
</dbReference>
<dbReference type="SMR" id="Q02077"/>
<dbReference type="GO" id="GO:0020002">
    <property type="term" value="C:host cell plasma membrane"/>
    <property type="evidence" value="ECO:0007669"/>
    <property type="project" value="UniProtKB-SubCell"/>
</dbReference>
<dbReference type="GO" id="GO:0016020">
    <property type="term" value="C:membrane"/>
    <property type="evidence" value="ECO:0007669"/>
    <property type="project" value="UniProtKB-KW"/>
</dbReference>
<dbReference type="GO" id="GO:0019031">
    <property type="term" value="C:viral envelope"/>
    <property type="evidence" value="ECO:0007669"/>
    <property type="project" value="UniProtKB-KW"/>
</dbReference>
<dbReference type="GO" id="GO:0055036">
    <property type="term" value="C:virion membrane"/>
    <property type="evidence" value="ECO:0007669"/>
    <property type="project" value="UniProtKB-SubCell"/>
</dbReference>
<dbReference type="GO" id="GO:0019064">
    <property type="term" value="P:fusion of virus membrane with host plasma membrane"/>
    <property type="evidence" value="ECO:0007669"/>
    <property type="project" value="UniProtKB-KW"/>
</dbReference>
<dbReference type="GO" id="GO:0046718">
    <property type="term" value="P:symbiont entry into host cell"/>
    <property type="evidence" value="ECO:0007669"/>
    <property type="project" value="UniProtKB-KW"/>
</dbReference>
<dbReference type="GO" id="GO:0019062">
    <property type="term" value="P:virion attachment to host cell"/>
    <property type="evidence" value="ECO:0007669"/>
    <property type="project" value="UniProtKB-KW"/>
</dbReference>
<dbReference type="Gene3D" id="3.90.310.10">
    <property type="entry name" value="ENV polyprotein, receptor-binding domain"/>
    <property type="match status" value="1"/>
</dbReference>
<dbReference type="InterPro" id="IPR008981">
    <property type="entry name" value="FMuLV_rcpt-bd"/>
</dbReference>
<dbReference type="InterPro" id="IPR018154">
    <property type="entry name" value="TLV/ENV_coat_polyprotein"/>
</dbReference>
<dbReference type="PANTHER" id="PTHR10424:SF72">
    <property type="entry name" value="BC035947 PROTEIN-RELATED"/>
    <property type="match status" value="1"/>
</dbReference>
<dbReference type="PANTHER" id="PTHR10424">
    <property type="entry name" value="VIRAL ENVELOPE PROTEIN"/>
    <property type="match status" value="1"/>
</dbReference>
<dbReference type="Pfam" id="PF00429">
    <property type="entry name" value="TLV_coat"/>
    <property type="match status" value="1"/>
</dbReference>
<dbReference type="SUPFAM" id="SSF49830">
    <property type="entry name" value="ENV polyprotein, receptor-binding domain"/>
    <property type="match status" value="1"/>
</dbReference>
<organism>
    <name type="scientific">Feline leukemia virus (strain C/FS246)</name>
    <dbReference type="NCBI Taxonomy" id="103918"/>
    <lineage>
        <taxon>Viruses</taxon>
        <taxon>Riboviria</taxon>
        <taxon>Pararnavirae</taxon>
        <taxon>Artverviricota</taxon>
        <taxon>Revtraviricetes</taxon>
        <taxon>Ortervirales</taxon>
        <taxon>Retroviridae</taxon>
        <taxon>Orthoretrovirinae</taxon>
        <taxon>Gammaretrovirus</taxon>
        <taxon>Feline leukemia virus</taxon>
    </lineage>
</organism>
<protein>
    <recommendedName>
        <fullName>Envelope glycoprotein</fullName>
    </recommendedName>
    <alternativeName>
        <fullName>Env polyprotein</fullName>
    </alternativeName>
    <component>
        <recommendedName>
            <fullName>Surface protein</fullName>
            <shortName>SU</shortName>
        </recommendedName>
        <alternativeName>
            <fullName>Glycoprotein 70</fullName>
            <shortName>gp70</shortName>
        </alternativeName>
    </component>
    <component>
        <recommendedName>
            <fullName>Transmembrane protein</fullName>
            <shortName>TM</shortName>
        </recommendedName>
        <alternativeName>
            <fullName>Envelope protein p15E</fullName>
        </alternativeName>
    </component>
</protein>
<proteinExistence type="inferred from homology"/>
<reference key="1">
    <citation type="journal article" date="1992" name="Proc. Natl. Acad. Sci. U.S.A.">
        <title>Feline leukemia virus subgroup C phenotype evolves through distinct alterations near the N-terminus of the envelope surface glycoprotein.</title>
        <authorList>
            <person name="Brojatsch J."/>
            <person name="Kristal B.S."/>
            <person name="Viglianti G.A."/>
            <person name="Khiroya R."/>
            <person name="Hoover E.A."/>
            <person name="Mullins J.I."/>
        </authorList>
    </citation>
    <scope>NUCLEOTIDE SEQUENCE [GENOMIC DNA]</scope>
</reference>
<feature type="signal peptide" evidence="1">
    <location>
        <begin position="1" status="less than"/>
        <end position="1"/>
    </location>
</feature>
<feature type="chain" id="PRO_0000040710" description="Surface protein" evidence="1">
    <location>
        <begin position="2"/>
        <end position="415"/>
    </location>
</feature>
<feature type="chain" id="PRO_0000040711" description="Transmembrane protein" evidence="1">
    <location>
        <begin position="416"/>
        <end position="436" status="greater than"/>
    </location>
</feature>
<feature type="topological domain" description="Extracellular" evidence="2">
    <location>
        <begin position="2"/>
        <end position="436" status="greater than"/>
    </location>
</feature>
<feature type="region of interest" description="Disordered" evidence="3">
    <location>
        <begin position="203"/>
        <end position="255"/>
    </location>
</feature>
<feature type="short sequence motif" description="CXXC">
    <location>
        <begin position="282"/>
        <end position="285"/>
    </location>
</feature>
<feature type="compositionally biased region" description="Polar residues" evidence="3">
    <location>
        <begin position="219"/>
        <end position="240"/>
    </location>
</feature>
<feature type="site" description="Cleavage; by host" evidence="1">
    <location>
        <begin position="415"/>
        <end position="416"/>
    </location>
</feature>
<feature type="glycosylation site" description="N-linked (GlcNAc...) asparagine; by host" evidence="2">
    <location>
        <position position="11"/>
    </location>
</feature>
<feature type="glycosylation site" description="N-linked (GlcNAc...) asparagine; by host" evidence="2">
    <location>
        <position position="26"/>
    </location>
</feature>
<feature type="glycosylation site" description="N-linked (GlcNAc...) asparagine; by host" evidence="2">
    <location>
        <position position="237"/>
    </location>
</feature>
<feature type="glycosylation site" description="N-linked (GlcNAc...) asparagine; by host" evidence="2">
    <location>
        <position position="272"/>
    </location>
</feature>
<feature type="glycosylation site" description="N-linked (GlcNAc...) asparagine; by host" evidence="2">
    <location>
        <position position="277"/>
    </location>
</feature>
<feature type="glycosylation site" description="N-linked (GlcNAc...) asparagine; by host" evidence="2">
    <location>
        <position position="304"/>
    </location>
</feature>
<feature type="glycosylation site" description="N-linked (GlcNAc...) asparagine; by host" evidence="2">
    <location>
        <position position="344"/>
    </location>
</feature>
<feature type="glycosylation site" description="N-linked (GlcNAc...) asparagine; by host" evidence="2">
    <location>
        <position position="360"/>
    </location>
</feature>
<feature type="glycosylation site" description="N-linked (GlcNAc...) asparagine; by host" evidence="2">
    <location>
        <position position="380"/>
    </location>
</feature>
<feature type="disulfide bond" evidence="1">
    <location>
        <begin position="95"/>
        <end position="117"/>
    </location>
</feature>
<feature type="disulfide bond" evidence="1">
    <location>
        <begin position="109"/>
        <end position="122"/>
    </location>
</feature>
<feature type="non-terminal residue">
    <location>
        <position position="1"/>
    </location>
</feature>
<feature type="non-terminal residue">
    <location>
        <position position="436"/>
    </location>
</feature>
<sequence length="436" mass="47445">MANPSPHQIYNVTWVITNVQTNTQANATSMLGTLTDAYPTLHVDLCDLVGDTWEPIVLNPTSVRPGAVLLSSSPKYGCKTTDRKKQQQTYPFYVCPGHAPSLGPKGTHCGGAQDGFCAAWGCETTGEAWWKPTSSWDYITVKRGSSPDNSCEGKCNPLVLQFTQKGRQASWDGPKMWGLRLYRTGYDPIALFTVSRQVSTITPPQAMGPNLVLPDQKPPSRQSQTGSKVATQRPQTNESAPRSVGPTTMGPKRIGTGDRLINLVQGTYLALNATDPNKTKDCWLCLVSRPPYYEGIAILGNYSNQTNPPPSCLSTPQHKLTISEVSGQGLCIGTVPKTHQALCNKTQQGHTGAHYLAAPNGTYWACNTGLTPCISMAVLNWTSDFCVLIELWPRVTYHQPEYVYTHFAKAVRFRREPISLTVALMLGGLTVGGIAA</sequence>
<accession>Q02077</accession>
<keyword id="KW-0165">Cleavage on pair of basic residues</keyword>
<keyword id="KW-1015">Disulfide bond</keyword>
<keyword id="KW-1169">Fusion of virus membrane with host cell membrane</keyword>
<keyword id="KW-1168">Fusion of virus membrane with host membrane</keyword>
<keyword id="KW-0325">Glycoprotein</keyword>
<keyword id="KW-1032">Host cell membrane</keyword>
<keyword id="KW-1043">Host membrane</keyword>
<keyword id="KW-0945">Host-virus interaction</keyword>
<keyword id="KW-0472">Membrane</keyword>
<keyword id="KW-0732">Signal</keyword>
<keyword id="KW-1161">Viral attachment to host cell</keyword>
<keyword id="KW-0261">Viral envelope protein</keyword>
<keyword id="KW-1162">Viral penetration into host cytoplasm</keyword>
<keyword id="KW-0946">Virion</keyword>
<keyword id="KW-1160">Virus entry into host cell</keyword>
<organismHost>
    <name type="scientific">Felis catus</name>
    <name type="common">Cat</name>
    <name type="synonym">Felis silvestris catus</name>
    <dbReference type="NCBI Taxonomy" id="9685"/>
</organismHost>
<comment type="function">
    <text evidence="1">The surface protein (SU) attaches the virus to the host cell by binding to its receptor. This interaction triggers the refolding of the transmembrane protein (TM) and is thought to activate its fusogenic potential by unmasking its fusion peptide. Fusion occurs at the host cell plasma membrane (By similarity).</text>
</comment>
<comment type="function">
    <text evidence="1">The transmembrane protein (TM) acts as a class I viral fusion protein. Under the current model, the protein has at least 3 conformational states: pre-fusion native state, pre-hairpin intermediate state, and post-fusion hairpin state. During viral and target cell membrane fusion, the coiled coil regions (heptad repeats) assume a trimer-of-hairpins structure, positioning the fusion peptide in close proximity to the C-terminal region of the ectodomain. The formation of this structure appears to drive apposition and subsequent fusion of viral and target cell membranes. Membranes fusion leads to delivery of the nucleocapsid into the cytoplasm (By similarity).</text>
</comment>
<comment type="subunit">
    <text evidence="1">The mature envelope protein (Env) consists of a trimer of SU-TM heterodimers attached by a labile interchain disulfide bond.</text>
</comment>
<comment type="subcellular location">
    <molecule>Transmembrane protein</molecule>
    <subcellularLocation>
        <location evidence="1">Virion membrane</location>
        <topology evidence="1">Single-pass type I membrane protein</topology>
    </subcellularLocation>
    <subcellularLocation>
        <location evidence="1">Host cell membrane</location>
        <topology evidence="1">Single-pass type I membrane protein</topology>
    </subcellularLocation>
</comment>
<comment type="subcellular location">
    <molecule>Surface protein</molecule>
    <subcellularLocation>
        <location>Virion membrane</location>
        <topology>Peripheral membrane protein</topology>
    </subcellularLocation>
    <subcellularLocation>
        <location evidence="1">Host cell membrane</location>
        <topology evidence="1">Peripheral membrane protein</topology>
    </subcellularLocation>
    <text evidence="1">The surface protein is not anchored to the viral envelope, but associates with the extravirion surface through its binding to TM. Both proteins are thought to be concentrated at the site of budding and incorporated into the virions possibly by contacts between the cytoplasmic tail of Env and the N-terminus of Gag (By similarity).</text>
</comment>
<comment type="PTM">
    <text evidence="1">Specific enzymatic cleavages in vivo yield mature proteins. Envelope glycoproteins are synthesized as an inactive precursor that is N-glycosylated and processed likely by host cell furin or by a furin-like protease in the Golgi to yield the mature SU and TM proteins. The cleavage site between SU and TM requires the minimal sequence [KR]-X-[KR]-R (By similarity).</text>
</comment>
<evidence type="ECO:0000250" key="1"/>
<evidence type="ECO:0000255" key="2"/>
<evidence type="ECO:0000256" key="3">
    <source>
        <dbReference type="SAM" id="MobiDB-lite"/>
    </source>
</evidence>
<name>ENV_FLVCS</name>